<dbReference type="EMBL" id="CP000254">
    <property type="protein sequence ID" value="ABD42593.1"/>
    <property type="molecule type" value="Genomic_DNA"/>
</dbReference>
<dbReference type="RefSeq" id="WP_011449846.1">
    <property type="nucleotide sequence ID" value="NC_007796.1"/>
</dbReference>
<dbReference type="SMR" id="Q2FT97"/>
<dbReference type="FunCoup" id="Q2FT97">
    <property type="interactions" value="170"/>
</dbReference>
<dbReference type="STRING" id="323259.Mhun_2901"/>
<dbReference type="EnsemblBacteria" id="ABD42593">
    <property type="protein sequence ID" value="ABD42593"/>
    <property type="gene ID" value="Mhun_2901"/>
</dbReference>
<dbReference type="GeneID" id="3924462"/>
<dbReference type="KEGG" id="mhu:Mhun_2901"/>
<dbReference type="eggNOG" id="arCOG04239">
    <property type="taxonomic scope" value="Archaea"/>
</dbReference>
<dbReference type="HOGENOM" id="CLU_089738_1_1_2"/>
<dbReference type="InParanoid" id="Q2FT97"/>
<dbReference type="OrthoDB" id="10429at2157"/>
<dbReference type="Proteomes" id="UP000001941">
    <property type="component" value="Chromosome"/>
</dbReference>
<dbReference type="GO" id="GO:0015935">
    <property type="term" value="C:small ribosomal subunit"/>
    <property type="evidence" value="ECO:0007669"/>
    <property type="project" value="InterPro"/>
</dbReference>
<dbReference type="GO" id="GO:0019843">
    <property type="term" value="F:rRNA binding"/>
    <property type="evidence" value="ECO:0007669"/>
    <property type="project" value="UniProtKB-UniRule"/>
</dbReference>
<dbReference type="GO" id="GO:0003735">
    <property type="term" value="F:structural constituent of ribosome"/>
    <property type="evidence" value="ECO:0007669"/>
    <property type="project" value="InterPro"/>
</dbReference>
<dbReference type="GO" id="GO:0042274">
    <property type="term" value="P:ribosomal small subunit biogenesis"/>
    <property type="evidence" value="ECO:0007669"/>
    <property type="project" value="TreeGrafter"/>
</dbReference>
<dbReference type="GO" id="GO:0006412">
    <property type="term" value="P:translation"/>
    <property type="evidence" value="ECO:0007669"/>
    <property type="project" value="UniProtKB-UniRule"/>
</dbReference>
<dbReference type="CDD" id="cd00165">
    <property type="entry name" value="S4"/>
    <property type="match status" value="1"/>
</dbReference>
<dbReference type="Gene3D" id="3.10.290.10">
    <property type="entry name" value="RNA-binding S4 domain"/>
    <property type="match status" value="1"/>
</dbReference>
<dbReference type="HAMAP" id="MF_01306_A">
    <property type="entry name" value="Ribosomal_uS4_A"/>
    <property type="match status" value="1"/>
</dbReference>
<dbReference type="InterPro" id="IPR022801">
    <property type="entry name" value="Ribosomal_uS4"/>
</dbReference>
<dbReference type="InterPro" id="IPR022802">
    <property type="entry name" value="Ribosomal_uS4_arc"/>
</dbReference>
<dbReference type="InterPro" id="IPR018079">
    <property type="entry name" value="Ribosomal_uS4_CS"/>
</dbReference>
<dbReference type="InterPro" id="IPR005710">
    <property type="entry name" value="Ribosomal_uS4_euk/arc"/>
</dbReference>
<dbReference type="InterPro" id="IPR001912">
    <property type="entry name" value="Ribosomal_uS4_N"/>
</dbReference>
<dbReference type="InterPro" id="IPR002942">
    <property type="entry name" value="S4_RNA-bd"/>
</dbReference>
<dbReference type="InterPro" id="IPR036986">
    <property type="entry name" value="S4_RNA-bd_sf"/>
</dbReference>
<dbReference type="NCBIfam" id="NF003139">
    <property type="entry name" value="PRK04051.1"/>
    <property type="match status" value="1"/>
</dbReference>
<dbReference type="NCBIfam" id="TIGR01018">
    <property type="entry name" value="uS4_arch"/>
    <property type="match status" value="1"/>
</dbReference>
<dbReference type="PANTHER" id="PTHR11831">
    <property type="entry name" value="30S 40S RIBOSOMAL PROTEIN"/>
    <property type="match status" value="1"/>
</dbReference>
<dbReference type="PANTHER" id="PTHR11831:SF5">
    <property type="entry name" value="40S RIBOSOMAL PROTEIN S9"/>
    <property type="match status" value="1"/>
</dbReference>
<dbReference type="Pfam" id="PF01479">
    <property type="entry name" value="S4"/>
    <property type="match status" value="1"/>
</dbReference>
<dbReference type="SMART" id="SM01390">
    <property type="entry name" value="Ribosomal_S4"/>
    <property type="match status" value="1"/>
</dbReference>
<dbReference type="SMART" id="SM00363">
    <property type="entry name" value="S4"/>
    <property type="match status" value="1"/>
</dbReference>
<dbReference type="SUPFAM" id="SSF55174">
    <property type="entry name" value="Alpha-L RNA-binding motif"/>
    <property type="match status" value="1"/>
</dbReference>
<dbReference type="PROSITE" id="PS00632">
    <property type="entry name" value="RIBOSOMAL_S4"/>
    <property type="match status" value="1"/>
</dbReference>
<dbReference type="PROSITE" id="PS50889">
    <property type="entry name" value="S4"/>
    <property type="match status" value="1"/>
</dbReference>
<organism>
    <name type="scientific">Methanospirillum hungatei JF-1 (strain ATCC 27890 / DSM 864 / NBRC 100397 / JF-1)</name>
    <dbReference type="NCBI Taxonomy" id="323259"/>
    <lineage>
        <taxon>Archaea</taxon>
        <taxon>Methanobacteriati</taxon>
        <taxon>Methanobacteriota</taxon>
        <taxon>Stenosarchaea group</taxon>
        <taxon>Methanomicrobia</taxon>
        <taxon>Methanomicrobiales</taxon>
        <taxon>Methanospirillaceae</taxon>
        <taxon>Methanospirillum</taxon>
    </lineage>
</organism>
<evidence type="ECO:0000255" key="1">
    <source>
        <dbReference type="HAMAP-Rule" id="MF_01306"/>
    </source>
</evidence>
<evidence type="ECO:0000305" key="2"/>
<protein>
    <recommendedName>
        <fullName evidence="1">Small ribosomal subunit protein uS4</fullName>
    </recommendedName>
    <alternativeName>
        <fullName evidence="2">30S ribosomal protein S4</fullName>
    </alternativeName>
</protein>
<keyword id="KW-1185">Reference proteome</keyword>
<keyword id="KW-0687">Ribonucleoprotein</keyword>
<keyword id="KW-0689">Ribosomal protein</keyword>
<keyword id="KW-0694">RNA-binding</keyword>
<keyword id="KW-0699">rRNA-binding</keyword>
<gene>
    <name evidence="1" type="primary">rps4</name>
    <name type="ordered locus">Mhun_2901</name>
</gene>
<sequence length="181" mass="20729">MGYPGKNHKQYQTPKRPFELSRIEEETRLVIEYGLRNKREVWIAKGALRKYRKAAREIIALQSTGSEQARVERKKDELIGSLQRSGMLSENADIDDVLALKVEQQLDRRLQTQVYRRGFARSPKQARQFITHGHIAIGGRRVTIPGYTVSAKEQEEISYAGSSPLVSDIHSERQRIAKVGR</sequence>
<accession>Q2FT97</accession>
<comment type="function">
    <text evidence="1">One of the primary rRNA binding proteins, it binds directly to 16S rRNA where it nucleates assembly of the body of the 30S subunit.</text>
</comment>
<comment type="function">
    <text evidence="1">With S5 and S12 plays an important role in translational accuracy.</text>
</comment>
<comment type="subunit">
    <text evidence="1">Part of the 30S ribosomal subunit. Contacts protein S5. The interaction surface between S4 and S5 is involved in control of translational fidelity.</text>
</comment>
<comment type="similarity">
    <text evidence="1">Belongs to the universal ribosomal protein uS4 family.</text>
</comment>
<name>RS4_METHJ</name>
<proteinExistence type="inferred from homology"/>
<reference key="1">
    <citation type="journal article" date="2016" name="Stand. Genomic Sci.">
        <title>Complete genome sequence of Methanospirillum hungatei type strain JF1.</title>
        <authorList>
            <person name="Gunsalus R.P."/>
            <person name="Cook L.E."/>
            <person name="Crable B."/>
            <person name="Rohlin L."/>
            <person name="McDonald E."/>
            <person name="Mouttaki H."/>
            <person name="Sieber J.R."/>
            <person name="Poweleit N."/>
            <person name="Zhou H."/>
            <person name="Lapidus A.L."/>
            <person name="Daligault H.E."/>
            <person name="Land M."/>
            <person name="Gilna P."/>
            <person name="Ivanova N."/>
            <person name="Kyrpides N."/>
            <person name="Culley D.E."/>
            <person name="McInerney M.J."/>
        </authorList>
    </citation>
    <scope>NUCLEOTIDE SEQUENCE [LARGE SCALE GENOMIC DNA]</scope>
    <source>
        <strain>ATCC 27890 / DSM 864 / NBRC 100397 / JF-1</strain>
    </source>
</reference>
<feature type="chain" id="PRO_0000293409" description="Small ribosomal subunit protein uS4">
    <location>
        <begin position="1"/>
        <end position="181"/>
    </location>
</feature>
<feature type="domain" description="S4 RNA-binding" evidence="1">
    <location>
        <begin position="108"/>
        <end position="172"/>
    </location>
</feature>